<sequence>MARGGFPNMGGANMNNLMKQAQKLQQDMEKMQGEMEKKEFSATVGGGAVTAVANGKKQIVDIKIEPEVVDEDDIEMLEDLIMSACNEALKKAEEDTSSEVKRLTGGMNLPGMF</sequence>
<name>Y032_CLOBH</name>
<protein>
    <recommendedName>
        <fullName evidence="1">Nucleoid-associated protein CBO0032/CLC_0052</fullName>
    </recommendedName>
</protein>
<proteinExistence type="inferred from homology"/>
<organism>
    <name type="scientific">Clostridium botulinum (strain Hall / ATCC 3502 / NCTC 13319 / Type A)</name>
    <dbReference type="NCBI Taxonomy" id="441771"/>
    <lineage>
        <taxon>Bacteria</taxon>
        <taxon>Bacillati</taxon>
        <taxon>Bacillota</taxon>
        <taxon>Clostridia</taxon>
        <taxon>Eubacteriales</taxon>
        <taxon>Clostridiaceae</taxon>
        <taxon>Clostridium</taxon>
    </lineage>
</organism>
<accession>A5HXS7</accession>
<accession>A7FZV3</accession>
<reference key="1">
    <citation type="journal article" date="2007" name="Genome Res.">
        <title>Genome sequence of a proteolytic (Group I) Clostridium botulinum strain Hall A and comparative analysis of the clostridial genomes.</title>
        <authorList>
            <person name="Sebaihia M."/>
            <person name="Peck M.W."/>
            <person name="Minton N.P."/>
            <person name="Thomson N.R."/>
            <person name="Holden M.T.G."/>
            <person name="Mitchell W.J."/>
            <person name="Carter A.T."/>
            <person name="Bentley S.D."/>
            <person name="Mason D.R."/>
            <person name="Crossman L."/>
            <person name="Paul C.J."/>
            <person name="Ivens A."/>
            <person name="Wells-Bennik M.H.J."/>
            <person name="Davis I.J."/>
            <person name="Cerdeno-Tarraga A.M."/>
            <person name="Churcher C."/>
            <person name="Quail M.A."/>
            <person name="Chillingworth T."/>
            <person name="Feltwell T."/>
            <person name="Fraser A."/>
            <person name="Goodhead I."/>
            <person name="Hance Z."/>
            <person name="Jagels K."/>
            <person name="Larke N."/>
            <person name="Maddison M."/>
            <person name="Moule S."/>
            <person name="Mungall K."/>
            <person name="Norbertczak H."/>
            <person name="Rabbinowitsch E."/>
            <person name="Sanders M."/>
            <person name="Simmonds M."/>
            <person name="White B."/>
            <person name="Whithead S."/>
            <person name="Parkhill J."/>
        </authorList>
    </citation>
    <scope>NUCLEOTIDE SEQUENCE [LARGE SCALE GENOMIC DNA]</scope>
    <source>
        <strain>Hall / ATCC 3502 / NCTC 13319 / Type A</strain>
    </source>
</reference>
<reference key="2">
    <citation type="journal article" date="2007" name="PLoS ONE">
        <title>Analysis of the neurotoxin complex genes in Clostridium botulinum A1-A4 and B1 strains: BoNT/A3, /Ba4 and /B1 clusters are located within plasmids.</title>
        <authorList>
            <person name="Smith T.J."/>
            <person name="Hill K.K."/>
            <person name="Foley B.T."/>
            <person name="Detter J.C."/>
            <person name="Munk A.C."/>
            <person name="Bruce D.C."/>
            <person name="Doggett N.A."/>
            <person name="Smith L.A."/>
            <person name="Marks J.D."/>
            <person name="Xie G."/>
            <person name="Brettin T.S."/>
        </authorList>
    </citation>
    <scope>NUCLEOTIDE SEQUENCE [LARGE SCALE GENOMIC DNA]</scope>
    <source>
        <strain>Hall / ATCC 3502 / NCTC 13319 / Type A</strain>
    </source>
</reference>
<gene>
    <name type="ordered locus">CBO0032</name>
    <name type="ordered locus">CLC_0052</name>
</gene>
<evidence type="ECO:0000255" key="1">
    <source>
        <dbReference type="HAMAP-Rule" id="MF_00274"/>
    </source>
</evidence>
<evidence type="ECO:0000256" key="2">
    <source>
        <dbReference type="SAM" id="MobiDB-lite"/>
    </source>
</evidence>
<comment type="function">
    <text evidence="1">Binds to DNA and alters its conformation. May be involved in regulation of gene expression, nucleoid organization and DNA protection.</text>
</comment>
<comment type="subunit">
    <text evidence="1">Homodimer.</text>
</comment>
<comment type="subcellular location">
    <subcellularLocation>
        <location evidence="1">Cytoplasm</location>
        <location evidence="1">Nucleoid</location>
    </subcellularLocation>
</comment>
<comment type="similarity">
    <text evidence="1">Belongs to the YbaB/EbfC family.</text>
</comment>
<dbReference type="EMBL" id="CP000727">
    <property type="protein sequence ID" value="ABS36056.1"/>
    <property type="molecule type" value="Genomic_DNA"/>
</dbReference>
<dbReference type="EMBL" id="AM412317">
    <property type="protein sequence ID" value="CAL81585.1"/>
    <property type="molecule type" value="Genomic_DNA"/>
</dbReference>
<dbReference type="RefSeq" id="WP_003359499.1">
    <property type="nucleotide sequence ID" value="NC_009698.1"/>
</dbReference>
<dbReference type="RefSeq" id="YP_001252580.1">
    <property type="nucleotide sequence ID" value="NC_009495.1"/>
</dbReference>
<dbReference type="RefSeq" id="YP_001385991.1">
    <property type="nucleotide sequence ID" value="NC_009698.1"/>
</dbReference>
<dbReference type="SMR" id="A5HXS7"/>
<dbReference type="GeneID" id="5187213"/>
<dbReference type="KEGG" id="cbh:CLC_0052"/>
<dbReference type="KEGG" id="cbo:CBO0032"/>
<dbReference type="PATRIC" id="fig|413999.7.peg.30"/>
<dbReference type="HOGENOM" id="CLU_140930_1_0_9"/>
<dbReference type="PRO" id="PR:A5HXS7"/>
<dbReference type="Proteomes" id="UP000001986">
    <property type="component" value="Chromosome"/>
</dbReference>
<dbReference type="GO" id="GO:0043590">
    <property type="term" value="C:bacterial nucleoid"/>
    <property type="evidence" value="ECO:0007669"/>
    <property type="project" value="UniProtKB-UniRule"/>
</dbReference>
<dbReference type="GO" id="GO:0005829">
    <property type="term" value="C:cytosol"/>
    <property type="evidence" value="ECO:0000318"/>
    <property type="project" value="GO_Central"/>
</dbReference>
<dbReference type="GO" id="GO:0003677">
    <property type="term" value="F:DNA binding"/>
    <property type="evidence" value="ECO:0000318"/>
    <property type="project" value="GO_Central"/>
</dbReference>
<dbReference type="FunFam" id="3.30.1310.10:FF:000002">
    <property type="entry name" value="Nucleoid-associated protein IKC_06587"/>
    <property type="match status" value="1"/>
</dbReference>
<dbReference type="Gene3D" id="3.30.1310.10">
    <property type="entry name" value="Nucleoid-associated protein YbaB-like domain"/>
    <property type="match status" value="1"/>
</dbReference>
<dbReference type="HAMAP" id="MF_00274">
    <property type="entry name" value="DNA_YbaB_EbfC"/>
    <property type="match status" value="1"/>
</dbReference>
<dbReference type="InterPro" id="IPR036894">
    <property type="entry name" value="YbaB-like_sf"/>
</dbReference>
<dbReference type="InterPro" id="IPR004401">
    <property type="entry name" value="YbaB/EbfC"/>
</dbReference>
<dbReference type="NCBIfam" id="TIGR00103">
    <property type="entry name" value="DNA_YbaB_EbfC"/>
    <property type="match status" value="1"/>
</dbReference>
<dbReference type="PANTHER" id="PTHR33449">
    <property type="entry name" value="NUCLEOID-ASSOCIATED PROTEIN YBAB"/>
    <property type="match status" value="1"/>
</dbReference>
<dbReference type="PANTHER" id="PTHR33449:SF1">
    <property type="entry name" value="NUCLEOID-ASSOCIATED PROTEIN YBAB"/>
    <property type="match status" value="1"/>
</dbReference>
<dbReference type="Pfam" id="PF02575">
    <property type="entry name" value="YbaB_DNA_bd"/>
    <property type="match status" value="1"/>
</dbReference>
<dbReference type="PIRSF" id="PIRSF004555">
    <property type="entry name" value="UCP004555"/>
    <property type="match status" value="1"/>
</dbReference>
<dbReference type="SUPFAM" id="SSF82607">
    <property type="entry name" value="YbaB-like"/>
    <property type="match status" value="1"/>
</dbReference>
<keyword id="KW-0963">Cytoplasm</keyword>
<keyword id="KW-0238">DNA-binding</keyword>
<keyword id="KW-1185">Reference proteome</keyword>
<feature type="chain" id="PRO_1000003727" description="Nucleoid-associated protein CBO0032/CLC_0052">
    <location>
        <begin position="1"/>
        <end position="113"/>
    </location>
</feature>
<feature type="region of interest" description="Disordered" evidence="2">
    <location>
        <begin position="93"/>
        <end position="113"/>
    </location>
</feature>
<feature type="compositionally biased region" description="Basic and acidic residues" evidence="2">
    <location>
        <begin position="93"/>
        <end position="102"/>
    </location>
</feature>